<keyword id="KW-0028">Amino-acid biosynthesis</keyword>
<keyword id="KW-0055">Arginine biosynthesis</keyword>
<keyword id="KW-0963">Cytoplasm</keyword>
<keyword id="KW-0456">Lyase</keyword>
<keyword id="KW-1185">Reference proteome</keyword>
<reference key="1">
    <citation type="submission" date="2003-06" db="EMBL/GenBank/DDBJ databases">
        <title>The complete genome sequence of Haemophilus ducreyi.</title>
        <authorList>
            <person name="Munson R.S. Jr."/>
            <person name="Ray W.C."/>
            <person name="Mahairas G."/>
            <person name="Sabo P."/>
            <person name="Mungur R."/>
            <person name="Johnson L."/>
            <person name="Nguyen D."/>
            <person name="Wang J."/>
            <person name="Forst C."/>
            <person name="Hood L."/>
        </authorList>
    </citation>
    <scope>NUCLEOTIDE SEQUENCE [LARGE SCALE GENOMIC DNA]</scope>
    <source>
        <strain>35000HP / ATCC 700724</strain>
    </source>
</reference>
<sequence>MALWGGRFQQEADAKFKFFNDSLRFDYRLALQDIDGSIGWAKAITAVGILTEAECAKLVDALKTLRAEIEPNIAIILRDAAEDIHSWVESKLIEKVGDLGKKLHTGRSRNDQVALDMKMWCKVQVIVLQQCIRNLQHKLVATAEDNQQTIMPGYTHLQRAQPISFAHWCMAYYEMLERDYTRLTDAYQRMHTCPLGCGALAGSAYPIDRDQLAQDLHFEIATRNSLDSVSDRDHLLELLASASISMVHLSRFAEDLIFFNSGESAFLELSDRVTSGSSLMPQKKNPDACELIRGKSGRVFGALSGLLTTLKGLPLAYNKDMQEDKEGIFDAVETWQACLEMATLVLEDINVNVVRTSEAAQQGYSNATELADYLVAKGIPFREAHHIVGETVVYAIQQRKPLEALSVTEFKQFHSVIDQDVYAILSLPSCLAKRSAKGGVNPSRVKEAIEVAKQHLAS</sequence>
<gene>
    <name evidence="1" type="primary">argH</name>
    <name type="ordered locus">HD_1033</name>
</gene>
<evidence type="ECO:0000255" key="1">
    <source>
        <dbReference type="HAMAP-Rule" id="MF_00006"/>
    </source>
</evidence>
<accession>Q7VME5</accession>
<proteinExistence type="inferred from homology"/>
<name>ARLY_HAEDU</name>
<feature type="chain" id="PRO_0000137775" description="Argininosuccinate lyase">
    <location>
        <begin position="1"/>
        <end position="458"/>
    </location>
</feature>
<organism>
    <name type="scientific">Haemophilus ducreyi (strain 35000HP / ATCC 700724)</name>
    <dbReference type="NCBI Taxonomy" id="233412"/>
    <lineage>
        <taxon>Bacteria</taxon>
        <taxon>Pseudomonadati</taxon>
        <taxon>Pseudomonadota</taxon>
        <taxon>Gammaproteobacteria</taxon>
        <taxon>Pasteurellales</taxon>
        <taxon>Pasteurellaceae</taxon>
        <taxon>Haemophilus</taxon>
    </lineage>
</organism>
<protein>
    <recommendedName>
        <fullName evidence="1">Argininosuccinate lyase</fullName>
        <shortName evidence="1">ASAL</shortName>
        <ecNumber evidence="1">4.3.2.1</ecNumber>
    </recommendedName>
    <alternativeName>
        <fullName evidence="1">Arginosuccinase</fullName>
    </alternativeName>
</protein>
<comment type="catalytic activity">
    <reaction evidence="1">
        <text>2-(N(omega)-L-arginino)succinate = fumarate + L-arginine</text>
        <dbReference type="Rhea" id="RHEA:24020"/>
        <dbReference type="ChEBI" id="CHEBI:29806"/>
        <dbReference type="ChEBI" id="CHEBI:32682"/>
        <dbReference type="ChEBI" id="CHEBI:57472"/>
        <dbReference type="EC" id="4.3.2.1"/>
    </reaction>
</comment>
<comment type="pathway">
    <text evidence="1">Amino-acid biosynthesis; L-arginine biosynthesis; L-arginine from L-ornithine and carbamoyl phosphate: step 3/3.</text>
</comment>
<comment type="subcellular location">
    <subcellularLocation>
        <location evidence="1">Cytoplasm</location>
    </subcellularLocation>
</comment>
<comment type="similarity">
    <text evidence="1">Belongs to the lyase 1 family. Argininosuccinate lyase subfamily.</text>
</comment>
<dbReference type="EC" id="4.3.2.1" evidence="1"/>
<dbReference type="EMBL" id="AE017143">
    <property type="protein sequence ID" value="AAP95911.1"/>
    <property type="molecule type" value="Genomic_DNA"/>
</dbReference>
<dbReference type="RefSeq" id="WP_010944961.1">
    <property type="nucleotide sequence ID" value="NC_002940.2"/>
</dbReference>
<dbReference type="SMR" id="Q7VME5"/>
<dbReference type="STRING" id="233412.HD_1033"/>
<dbReference type="KEGG" id="hdu:HD_1033"/>
<dbReference type="eggNOG" id="COG0165">
    <property type="taxonomic scope" value="Bacteria"/>
</dbReference>
<dbReference type="HOGENOM" id="CLU_027272_2_3_6"/>
<dbReference type="OrthoDB" id="9769623at2"/>
<dbReference type="UniPathway" id="UPA00068">
    <property type="reaction ID" value="UER00114"/>
</dbReference>
<dbReference type="Proteomes" id="UP000001022">
    <property type="component" value="Chromosome"/>
</dbReference>
<dbReference type="GO" id="GO:0005829">
    <property type="term" value="C:cytosol"/>
    <property type="evidence" value="ECO:0007669"/>
    <property type="project" value="TreeGrafter"/>
</dbReference>
<dbReference type="GO" id="GO:0004056">
    <property type="term" value="F:argininosuccinate lyase activity"/>
    <property type="evidence" value="ECO:0007669"/>
    <property type="project" value="UniProtKB-UniRule"/>
</dbReference>
<dbReference type="GO" id="GO:0042450">
    <property type="term" value="P:arginine biosynthetic process via ornithine"/>
    <property type="evidence" value="ECO:0007669"/>
    <property type="project" value="InterPro"/>
</dbReference>
<dbReference type="GO" id="GO:0006526">
    <property type="term" value="P:L-arginine biosynthetic process"/>
    <property type="evidence" value="ECO:0007669"/>
    <property type="project" value="UniProtKB-UniRule"/>
</dbReference>
<dbReference type="CDD" id="cd01359">
    <property type="entry name" value="Argininosuccinate_lyase"/>
    <property type="match status" value="1"/>
</dbReference>
<dbReference type="FunFam" id="1.10.40.30:FF:000001">
    <property type="entry name" value="Argininosuccinate lyase"/>
    <property type="match status" value="1"/>
</dbReference>
<dbReference type="FunFam" id="1.20.200.10:FF:000006">
    <property type="entry name" value="Argininosuccinate lyase"/>
    <property type="match status" value="1"/>
</dbReference>
<dbReference type="Gene3D" id="1.10.40.30">
    <property type="entry name" value="Fumarase/aspartase (C-terminal domain)"/>
    <property type="match status" value="1"/>
</dbReference>
<dbReference type="Gene3D" id="1.20.200.10">
    <property type="entry name" value="Fumarase/aspartase (Central domain)"/>
    <property type="match status" value="1"/>
</dbReference>
<dbReference type="Gene3D" id="1.10.275.10">
    <property type="entry name" value="Fumarase/aspartase (N-terminal domain)"/>
    <property type="match status" value="1"/>
</dbReference>
<dbReference type="HAMAP" id="MF_00006">
    <property type="entry name" value="Arg_succ_lyase"/>
    <property type="match status" value="1"/>
</dbReference>
<dbReference type="InterPro" id="IPR029419">
    <property type="entry name" value="Arg_succ_lyase_C"/>
</dbReference>
<dbReference type="InterPro" id="IPR009049">
    <property type="entry name" value="Argininosuccinate_lyase"/>
</dbReference>
<dbReference type="InterPro" id="IPR024083">
    <property type="entry name" value="Fumarase/histidase_N"/>
</dbReference>
<dbReference type="InterPro" id="IPR020557">
    <property type="entry name" value="Fumarate_lyase_CS"/>
</dbReference>
<dbReference type="InterPro" id="IPR000362">
    <property type="entry name" value="Fumarate_lyase_fam"/>
</dbReference>
<dbReference type="InterPro" id="IPR022761">
    <property type="entry name" value="Fumarate_lyase_N"/>
</dbReference>
<dbReference type="InterPro" id="IPR008948">
    <property type="entry name" value="L-Aspartase-like"/>
</dbReference>
<dbReference type="NCBIfam" id="TIGR00838">
    <property type="entry name" value="argH"/>
    <property type="match status" value="1"/>
</dbReference>
<dbReference type="NCBIfam" id="NF008964">
    <property type="entry name" value="PRK12308.1"/>
    <property type="match status" value="1"/>
</dbReference>
<dbReference type="PANTHER" id="PTHR43814">
    <property type="entry name" value="ARGININOSUCCINATE LYASE"/>
    <property type="match status" value="1"/>
</dbReference>
<dbReference type="PANTHER" id="PTHR43814:SF1">
    <property type="entry name" value="ARGININOSUCCINATE LYASE"/>
    <property type="match status" value="1"/>
</dbReference>
<dbReference type="Pfam" id="PF14698">
    <property type="entry name" value="ASL_C2"/>
    <property type="match status" value="1"/>
</dbReference>
<dbReference type="Pfam" id="PF00206">
    <property type="entry name" value="Lyase_1"/>
    <property type="match status" value="1"/>
</dbReference>
<dbReference type="PRINTS" id="PR00145">
    <property type="entry name" value="ARGSUCLYASE"/>
</dbReference>
<dbReference type="PRINTS" id="PR00149">
    <property type="entry name" value="FUMRATELYASE"/>
</dbReference>
<dbReference type="SUPFAM" id="SSF48557">
    <property type="entry name" value="L-aspartase-like"/>
    <property type="match status" value="1"/>
</dbReference>
<dbReference type="PROSITE" id="PS00163">
    <property type="entry name" value="FUMARATE_LYASES"/>
    <property type="match status" value="1"/>
</dbReference>